<organism>
    <name type="scientific">Caulobacter vibrioides (strain ATCC 19089 / CIP 103742 / CB 15)</name>
    <name type="common">Caulobacter crescentus</name>
    <dbReference type="NCBI Taxonomy" id="190650"/>
    <lineage>
        <taxon>Bacteria</taxon>
        <taxon>Pseudomonadati</taxon>
        <taxon>Pseudomonadota</taxon>
        <taxon>Alphaproteobacteria</taxon>
        <taxon>Caulobacterales</taxon>
        <taxon>Caulobacteraceae</taxon>
        <taxon>Caulobacter</taxon>
    </lineage>
</organism>
<proteinExistence type="inferred from homology"/>
<accession>Q9A805</accession>
<reference key="1">
    <citation type="journal article" date="2001" name="Proc. Natl. Acad. Sci. U.S.A.">
        <title>Complete genome sequence of Caulobacter crescentus.</title>
        <authorList>
            <person name="Nierman W.C."/>
            <person name="Feldblyum T.V."/>
            <person name="Laub M.T."/>
            <person name="Paulsen I.T."/>
            <person name="Nelson K.E."/>
            <person name="Eisen J.A."/>
            <person name="Heidelberg J.F."/>
            <person name="Alley M.R.K."/>
            <person name="Ohta N."/>
            <person name="Maddock J.R."/>
            <person name="Potocka I."/>
            <person name="Nelson W.C."/>
            <person name="Newton A."/>
            <person name="Stephens C."/>
            <person name="Phadke N.D."/>
            <person name="Ely B."/>
            <person name="DeBoy R.T."/>
            <person name="Dodson R.J."/>
            <person name="Durkin A.S."/>
            <person name="Gwinn M.L."/>
            <person name="Haft D.H."/>
            <person name="Kolonay J.F."/>
            <person name="Smit J."/>
            <person name="Craven M.B."/>
            <person name="Khouri H.M."/>
            <person name="Shetty J."/>
            <person name="Berry K.J."/>
            <person name="Utterback T.R."/>
            <person name="Tran K."/>
            <person name="Wolf A.M."/>
            <person name="Vamathevan J.J."/>
            <person name="Ermolaeva M.D."/>
            <person name="White O."/>
            <person name="Salzberg S.L."/>
            <person name="Venter J.C."/>
            <person name="Shapiro L."/>
            <person name="Fraser C.M."/>
        </authorList>
    </citation>
    <scope>NUCLEOTIDE SEQUENCE [LARGE SCALE GENOMIC DNA]</scope>
    <source>
        <strain>ATCC 19089 / CIP 103742 / CB 15</strain>
    </source>
</reference>
<name>RNC_CAUVC</name>
<comment type="function">
    <text evidence="1">Digests double-stranded RNA. Involved in the processing of primary rRNA transcript to yield the immediate precursors to the large and small rRNAs (23S and 16S). Processes some mRNAs, and tRNAs when they are encoded in the rRNA operon. Processes pre-crRNA and tracrRNA of type II CRISPR loci if present in the organism.</text>
</comment>
<comment type="catalytic activity">
    <reaction evidence="1">
        <text>Endonucleolytic cleavage to 5'-phosphomonoester.</text>
        <dbReference type="EC" id="3.1.26.3"/>
    </reaction>
</comment>
<comment type="cofactor">
    <cofactor evidence="1">
        <name>Mg(2+)</name>
        <dbReference type="ChEBI" id="CHEBI:18420"/>
    </cofactor>
</comment>
<comment type="subunit">
    <text evidence="1">Homodimer.</text>
</comment>
<comment type="subcellular location">
    <subcellularLocation>
        <location evidence="1">Cytoplasm</location>
    </subcellularLocation>
</comment>
<comment type="similarity">
    <text evidence="1">Belongs to the ribonuclease III family.</text>
</comment>
<protein>
    <recommendedName>
        <fullName evidence="1">Ribonuclease 3</fullName>
        <ecNumber evidence="1">3.1.26.3</ecNumber>
    </recommendedName>
    <alternativeName>
        <fullName evidence="1">Ribonuclease III</fullName>
        <shortName evidence="1">RNase III</shortName>
    </alternativeName>
</protein>
<evidence type="ECO:0000255" key="1">
    <source>
        <dbReference type="HAMAP-Rule" id="MF_00104"/>
    </source>
</evidence>
<evidence type="ECO:0000256" key="2">
    <source>
        <dbReference type="SAM" id="MobiDB-lite"/>
    </source>
</evidence>
<gene>
    <name evidence="1" type="primary">rnc</name>
    <name type="ordered locus">CC_1560</name>
</gene>
<feature type="chain" id="PRO_0000180384" description="Ribonuclease 3">
    <location>
        <begin position="1"/>
        <end position="231"/>
    </location>
</feature>
<feature type="domain" description="RNase III" evidence="1">
    <location>
        <begin position="8"/>
        <end position="135"/>
    </location>
</feature>
<feature type="domain" description="DRBM" evidence="1">
    <location>
        <begin position="161"/>
        <end position="230"/>
    </location>
</feature>
<feature type="region of interest" description="Disordered" evidence="2">
    <location>
        <begin position="210"/>
        <end position="231"/>
    </location>
</feature>
<feature type="compositionally biased region" description="Basic and acidic residues" evidence="2">
    <location>
        <begin position="212"/>
        <end position="231"/>
    </location>
</feature>
<feature type="active site" evidence="1">
    <location>
        <position position="52"/>
    </location>
</feature>
<feature type="active site" evidence="1">
    <location>
        <position position="124"/>
    </location>
</feature>
<feature type="binding site" evidence="1">
    <location>
        <position position="48"/>
    </location>
    <ligand>
        <name>Mg(2+)</name>
        <dbReference type="ChEBI" id="CHEBI:18420"/>
    </ligand>
</feature>
<feature type="binding site" evidence="1">
    <location>
        <position position="124"/>
    </location>
    <ligand>
        <name>Mg(2+)</name>
        <dbReference type="ChEBI" id="CHEBI:18420"/>
    </ligand>
</feature>
<keyword id="KW-0963">Cytoplasm</keyword>
<keyword id="KW-0255">Endonuclease</keyword>
<keyword id="KW-0378">Hydrolase</keyword>
<keyword id="KW-0460">Magnesium</keyword>
<keyword id="KW-0479">Metal-binding</keyword>
<keyword id="KW-0507">mRNA processing</keyword>
<keyword id="KW-0540">Nuclease</keyword>
<keyword id="KW-1185">Reference proteome</keyword>
<keyword id="KW-0694">RNA-binding</keyword>
<keyword id="KW-0698">rRNA processing</keyword>
<keyword id="KW-0699">rRNA-binding</keyword>
<keyword id="KW-0819">tRNA processing</keyword>
<dbReference type="EC" id="3.1.26.3" evidence="1"/>
<dbReference type="EMBL" id="AE005673">
    <property type="protein sequence ID" value="AAK23539.1"/>
    <property type="molecule type" value="Genomic_DNA"/>
</dbReference>
<dbReference type="PIR" id="G87442">
    <property type="entry name" value="G87442"/>
</dbReference>
<dbReference type="RefSeq" id="NP_420371.1">
    <property type="nucleotide sequence ID" value="NC_002696.2"/>
</dbReference>
<dbReference type="RefSeq" id="WP_010919434.1">
    <property type="nucleotide sequence ID" value="NC_002696.2"/>
</dbReference>
<dbReference type="SMR" id="Q9A805"/>
<dbReference type="STRING" id="190650.CC_1560"/>
<dbReference type="EnsemblBacteria" id="AAK23539">
    <property type="protein sequence ID" value="AAK23539"/>
    <property type="gene ID" value="CC_1560"/>
</dbReference>
<dbReference type="KEGG" id="ccr:CC_1560"/>
<dbReference type="PATRIC" id="fig|190650.5.peg.1589"/>
<dbReference type="eggNOG" id="COG0571">
    <property type="taxonomic scope" value="Bacteria"/>
</dbReference>
<dbReference type="HOGENOM" id="CLU_000907_1_1_5"/>
<dbReference type="BioCyc" id="CAULO:CC1560-MONOMER"/>
<dbReference type="CD-CODE" id="EF55C906">
    <property type="entry name" value="BR-bodies"/>
</dbReference>
<dbReference type="Proteomes" id="UP000001816">
    <property type="component" value="Chromosome"/>
</dbReference>
<dbReference type="GO" id="GO:0005737">
    <property type="term" value="C:cytoplasm"/>
    <property type="evidence" value="ECO:0007669"/>
    <property type="project" value="UniProtKB-SubCell"/>
</dbReference>
<dbReference type="GO" id="GO:0003725">
    <property type="term" value="F:double-stranded RNA binding"/>
    <property type="evidence" value="ECO:0007669"/>
    <property type="project" value="TreeGrafter"/>
</dbReference>
<dbReference type="GO" id="GO:0046872">
    <property type="term" value="F:metal ion binding"/>
    <property type="evidence" value="ECO:0007669"/>
    <property type="project" value="UniProtKB-KW"/>
</dbReference>
<dbReference type="GO" id="GO:0004525">
    <property type="term" value="F:ribonuclease III activity"/>
    <property type="evidence" value="ECO:0007669"/>
    <property type="project" value="UniProtKB-UniRule"/>
</dbReference>
<dbReference type="GO" id="GO:0019843">
    <property type="term" value="F:rRNA binding"/>
    <property type="evidence" value="ECO:0007669"/>
    <property type="project" value="UniProtKB-KW"/>
</dbReference>
<dbReference type="GO" id="GO:0006397">
    <property type="term" value="P:mRNA processing"/>
    <property type="evidence" value="ECO:0007669"/>
    <property type="project" value="UniProtKB-UniRule"/>
</dbReference>
<dbReference type="GO" id="GO:0010468">
    <property type="term" value="P:regulation of gene expression"/>
    <property type="evidence" value="ECO:0007669"/>
    <property type="project" value="TreeGrafter"/>
</dbReference>
<dbReference type="GO" id="GO:0006364">
    <property type="term" value="P:rRNA processing"/>
    <property type="evidence" value="ECO:0007669"/>
    <property type="project" value="UniProtKB-UniRule"/>
</dbReference>
<dbReference type="GO" id="GO:0008033">
    <property type="term" value="P:tRNA processing"/>
    <property type="evidence" value="ECO:0007669"/>
    <property type="project" value="UniProtKB-KW"/>
</dbReference>
<dbReference type="CDD" id="cd10845">
    <property type="entry name" value="DSRM_RNAse_III_family"/>
    <property type="match status" value="1"/>
</dbReference>
<dbReference type="CDD" id="cd00593">
    <property type="entry name" value="RIBOc"/>
    <property type="match status" value="1"/>
</dbReference>
<dbReference type="FunFam" id="1.10.1520.10:FF:000001">
    <property type="entry name" value="Ribonuclease 3"/>
    <property type="match status" value="1"/>
</dbReference>
<dbReference type="FunFam" id="3.30.160.20:FF:000003">
    <property type="entry name" value="Ribonuclease 3"/>
    <property type="match status" value="1"/>
</dbReference>
<dbReference type="Gene3D" id="3.30.160.20">
    <property type="match status" value="1"/>
</dbReference>
<dbReference type="Gene3D" id="1.10.1520.10">
    <property type="entry name" value="Ribonuclease III domain"/>
    <property type="match status" value="1"/>
</dbReference>
<dbReference type="HAMAP" id="MF_00104">
    <property type="entry name" value="RNase_III"/>
    <property type="match status" value="1"/>
</dbReference>
<dbReference type="InterPro" id="IPR014720">
    <property type="entry name" value="dsRBD_dom"/>
</dbReference>
<dbReference type="InterPro" id="IPR011907">
    <property type="entry name" value="RNase_III"/>
</dbReference>
<dbReference type="InterPro" id="IPR000999">
    <property type="entry name" value="RNase_III_dom"/>
</dbReference>
<dbReference type="InterPro" id="IPR036389">
    <property type="entry name" value="RNase_III_sf"/>
</dbReference>
<dbReference type="NCBIfam" id="TIGR02191">
    <property type="entry name" value="RNaseIII"/>
    <property type="match status" value="1"/>
</dbReference>
<dbReference type="PANTHER" id="PTHR11207:SF0">
    <property type="entry name" value="RIBONUCLEASE 3"/>
    <property type="match status" value="1"/>
</dbReference>
<dbReference type="PANTHER" id="PTHR11207">
    <property type="entry name" value="RIBONUCLEASE III"/>
    <property type="match status" value="1"/>
</dbReference>
<dbReference type="Pfam" id="PF00035">
    <property type="entry name" value="dsrm"/>
    <property type="match status" value="1"/>
</dbReference>
<dbReference type="Pfam" id="PF14622">
    <property type="entry name" value="Ribonucleas_3_3"/>
    <property type="match status" value="1"/>
</dbReference>
<dbReference type="SMART" id="SM00358">
    <property type="entry name" value="DSRM"/>
    <property type="match status" value="1"/>
</dbReference>
<dbReference type="SMART" id="SM00535">
    <property type="entry name" value="RIBOc"/>
    <property type="match status" value="1"/>
</dbReference>
<dbReference type="SUPFAM" id="SSF54768">
    <property type="entry name" value="dsRNA-binding domain-like"/>
    <property type="match status" value="1"/>
</dbReference>
<dbReference type="SUPFAM" id="SSF69065">
    <property type="entry name" value="RNase III domain-like"/>
    <property type="match status" value="1"/>
</dbReference>
<dbReference type="PROSITE" id="PS50137">
    <property type="entry name" value="DS_RBD"/>
    <property type="match status" value="1"/>
</dbReference>
<dbReference type="PROSITE" id="PS50142">
    <property type="entry name" value="RNASE_3_2"/>
    <property type="match status" value="1"/>
</dbReference>
<sequence length="231" mass="24971">MDRRVAAVGDLERRIGHRFEDRELLERALTHASVGDGAKKVRDNEVLEFIGDRVLGLLAAEALAQRFPKAKEGELAPRLNALVSRETCARVARKAELGPALRLSASSSKIGGRETDSILAGATEALMAALYQDGGLEAARKVFLDLWNDEFDRAGEGRPRDPKTALQEWAQGQGRPLPTYRVLDRTGPDHAPVFTVEVSVTGVDPAIAKGKSRQEAEKAAAKALLEREGAG</sequence>